<comment type="function">
    <text evidence="1">Plays an important role in the de novo pathway of purine nucleotide biosynthesis. Catalyzes the first committed step in the biosynthesis of AMP from IMP.</text>
</comment>
<comment type="catalytic activity">
    <reaction evidence="1">
        <text>IMP + L-aspartate + GTP = N(6)-(1,2-dicarboxyethyl)-AMP + GDP + phosphate + 2 H(+)</text>
        <dbReference type="Rhea" id="RHEA:15753"/>
        <dbReference type="ChEBI" id="CHEBI:15378"/>
        <dbReference type="ChEBI" id="CHEBI:29991"/>
        <dbReference type="ChEBI" id="CHEBI:37565"/>
        <dbReference type="ChEBI" id="CHEBI:43474"/>
        <dbReference type="ChEBI" id="CHEBI:57567"/>
        <dbReference type="ChEBI" id="CHEBI:58053"/>
        <dbReference type="ChEBI" id="CHEBI:58189"/>
        <dbReference type="EC" id="6.3.4.4"/>
    </reaction>
</comment>
<comment type="cofactor">
    <cofactor evidence="1">
        <name>Mg(2+)</name>
        <dbReference type="ChEBI" id="CHEBI:18420"/>
    </cofactor>
    <text evidence="1">Binds 1 Mg(2+) ion per subunit.</text>
</comment>
<comment type="pathway">
    <text evidence="1">Purine metabolism; AMP biosynthesis via de novo pathway; AMP from IMP: step 1/2.</text>
</comment>
<comment type="subunit">
    <text evidence="1">Homodimer.</text>
</comment>
<comment type="subcellular location">
    <subcellularLocation>
        <location evidence="1">Cytoplasm</location>
    </subcellularLocation>
</comment>
<comment type="similarity">
    <text evidence="1">Belongs to the adenylosuccinate synthetase family.</text>
</comment>
<accession>P0C115</accession>
<accession>P52004</accession>
<accession>Q57BJ7</accession>
<sequence>MANVVVVGSQWGDEGKGKIVDWLSERADVIVRYQGGHNAGHTLVIDGVSYKLSLLPSGLVRGKLSVIGNGVVVDPHHFVAEVEKLRGQGIDVTPDVLRVAENAPLILSIHRELDAMREGSNSGLKIGTTKRGIGPAYEDKVGRRAIRVIDLTEPETLRPKVERLLAHHNSLRRGMGLEEIAVETILTELTSVADQILPYIDQVWRVLDERRKAGARILFEGAQGALLDNDHGTYPFVTSSNTVAGQAAAGSGLGPTAIGYVLGITKAYTTRVGEGPFPTELNDEIGEFLGTKGHEFGVVTGRKRRCGWFDAVIVRQTVRTSGINGIALTKLDVLDGLEEIKICVAYELDGKRIDYLPSSMGAQARVKPIYETLPGWSETTAGARSWNDLPAQAVKYVRHIEELIGAPVAMLSTSPEREDTILVTDPFHD</sequence>
<protein>
    <recommendedName>
        <fullName evidence="1">Adenylosuccinate synthetase</fullName>
        <shortName evidence="1">AMPSase</shortName>
        <shortName evidence="1">AdSS</shortName>
        <ecNumber evidence="1">6.3.4.4</ecNumber>
    </recommendedName>
    <alternativeName>
        <fullName evidence="1">IMP--aspartate ligase</fullName>
    </alternativeName>
</protein>
<gene>
    <name evidence="1" type="primary">purA</name>
    <name type="ordered locus">BruAb1_1668</name>
</gene>
<dbReference type="EC" id="6.3.4.4" evidence="1"/>
<dbReference type="EMBL" id="AE017223">
    <property type="protein sequence ID" value="AAX74987.1"/>
    <property type="molecule type" value="Genomic_DNA"/>
</dbReference>
<dbReference type="RefSeq" id="WP_002964773.1">
    <property type="nucleotide sequence ID" value="NC_006932.1"/>
</dbReference>
<dbReference type="SMR" id="P0C115"/>
<dbReference type="EnsemblBacteria" id="AAX74987">
    <property type="protein sequence ID" value="AAX74987"/>
    <property type="gene ID" value="BruAb1_1668"/>
</dbReference>
<dbReference type="KEGG" id="bmb:BruAb1_1668"/>
<dbReference type="HOGENOM" id="CLU_029848_0_0_5"/>
<dbReference type="UniPathway" id="UPA00075">
    <property type="reaction ID" value="UER00335"/>
</dbReference>
<dbReference type="Proteomes" id="UP000000540">
    <property type="component" value="Chromosome I"/>
</dbReference>
<dbReference type="GO" id="GO:0005737">
    <property type="term" value="C:cytoplasm"/>
    <property type="evidence" value="ECO:0007669"/>
    <property type="project" value="UniProtKB-SubCell"/>
</dbReference>
<dbReference type="GO" id="GO:0004019">
    <property type="term" value="F:adenylosuccinate synthase activity"/>
    <property type="evidence" value="ECO:0007669"/>
    <property type="project" value="UniProtKB-UniRule"/>
</dbReference>
<dbReference type="GO" id="GO:0005525">
    <property type="term" value="F:GTP binding"/>
    <property type="evidence" value="ECO:0007669"/>
    <property type="project" value="UniProtKB-UniRule"/>
</dbReference>
<dbReference type="GO" id="GO:0000287">
    <property type="term" value="F:magnesium ion binding"/>
    <property type="evidence" value="ECO:0007669"/>
    <property type="project" value="UniProtKB-UniRule"/>
</dbReference>
<dbReference type="GO" id="GO:0044208">
    <property type="term" value="P:'de novo' AMP biosynthetic process"/>
    <property type="evidence" value="ECO:0007669"/>
    <property type="project" value="UniProtKB-UniRule"/>
</dbReference>
<dbReference type="GO" id="GO:0046040">
    <property type="term" value="P:IMP metabolic process"/>
    <property type="evidence" value="ECO:0007669"/>
    <property type="project" value="TreeGrafter"/>
</dbReference>
<dbReference type="CDD" id="cd03108">
    <property type="entry name" value="AdSS"/>
    <property type="match status" value="1"/>
</dbReference>
<dbReference type="FunFam" id="1.10.300.10:FF:000001">
    <property type="entry name" value="Adenylosuccinate synthetase"/>
    <property type="match status" value="1"/>
</dbReference>
<dbReference type="FunFam" id="3.90.170.10:FF:000001">
    <property type="entry name" value="Adenylosuccinate synthetase"/>
    <property type="match status" value="1"/>
</dbReference>
<dbReference type="Gene3D" id="3.40.440.10">
    <property type="entry name" value="Adenylosuccinate Synthetase, subunit A, domain 1"/>
    <property type="match status" value="1"/>
</dbReference>
<dbReference type="Gene3D" id="1.10.300.10">
    <property type="entry name" value="Adenylosuccinate Synthetase, subunit A, domain 2"/>
    <property type="match status" value="1"/>
</dbReference>
<dbReference type="Gene3D" id="3.90.170.10">
    <property type="entry name" value="Adenylosuccinate Synthetase, subunit A, domain 3"/>
    <property type="match status" value="1"/>
</dbReference>
<dbReference type="HAMAP" id="MF_00011">
    <property type="entry name" value="Adenylosucc_synth"/>
    <property type="match status" value="1"/>
</dbReference>
<dbReference type="InterPro" id="IPR018220">
    <property type="entry name" value="Adenylosuccin_syn_GTP-bd"/>
</dbReference>
<dbReference type="InterPro" id="IPR033128">
    <property type="entry name" value="Adenylosuccin_syn_Lys_AS"/>
</dbReference>
<dbReference type="InterPro" id="IPR042109">
    <property type="entry name" value="Adenylosuccinate_synth_dom1"/>
</dbReference>
<dbReference type="InterPro" id="IPR042110">
    <property type="entry name" value="Adenylosuccinate_synth_dom2"/>
</dbReference>
<dbReference type="InterPro" id="IPR042111">
    <property type="entry name" value="Adenylosuccinate_synth_dom3"/>
</dbReference>
<dbReference type="InterPro" id="IPR001114">
    <property type="entry name" value="Adenylosuccinate_synthetase"/>
</dbReference>
<dbReference type="InterPro" id="IPR027417">
    <property type="entry name" value="P-loop_NTPase"/>
</dbReference>
<dbReference type="NCBIfam" id="NF002223">
    <property type="entry name" value="PRK01117.1"/>
    <property type="match status" value="1"/>
</dbReference>
<dbReference type="NCBIfam" id="TIGR00184">
    <property type="entry name" value="purA"/>
    <property type="match status" value="1"/>
</dbReference>
<dbReference type="PANTHER" id="PTHR11846">
    <property type="entry name" value="ADENYLOSUCCINATE SYNTHETASE"/>
    <property type="match status" value="1"/>
</dbReference>
<dbReference type="PANTHER" id="PTHR11846:SF0">
    <property type="entry name" value="ADENYLOSUCCINATE SYNTHETASE"/>
    <property type="match status" value="1"/>
</dbReference>
<dbReference type="Pfam" id="PF00709">
    <property type="entry name" value="Adenylsucc_synt"/>
    <property type="match status" value="1"/>
</dbReference>
<dbReference type="SMART" id="SM00788">
    <property type="entry name" value="Adenylsucc_synt"/>
    <property type="match status" value="1"/>
</dbReference>
<dbReference type="SUPFAM" id="SSF52540">
    <property type="entry name" value="P-loop containing nucleoside triphosphate hydrolases"/>
    <property type="match status" value="1"/>
</dbReference>
<dbReference type="PROSITE" id="PS01266">
    <property type="entry name" value="ADENYLOSUCCIN_SYN_1"/>
    <property type="match status" value="1"/>
</dbReference>
<dbReference type="PROSITE" id="PS00513">
    <property type="entry name" value="ADENYLOSUCCIN_SYN_2"/>
    <property type="match status" value="1"/>
</dbReference>
<proteinExistence type="inferred from homology"/>
<reference key="1">
    <citation type="journal article" date="2005" name="J. Bacteriol.">
        <title>Completion of the genome sequence of Brucella abortus and comparison to the highly similar genomes of Brucella melitensis and Brucella suis.</title>
        <authorList>
            <person name="Halling S.M."/>
            <person name="Peterson-Burch B.D."/>
            <person name="Bricker B.J."/>
            <person name="Zuerner R.L."/>
            <person name="Qing Z."/>
            <person name="Li L.-L."/>
            <person name="Kapur V."/>
            <person name="Alt D.P."/>
            <person name="Olsen S.C."/>
        </authorList>
    </citation>
    <scope>NUCLEOTIDE SEQUENCE [LARGE SCALE GENOMIC DNA]</scope>
    <source>
        <strain>9-941</strain>
    </source>
</reference>
<keyword id="KW-0963">Cytoplasm</keyword>
<keyword id="KW-0342">GTP-binding</keyword>
<keyword id="KW-0436">Ligase</keyword>
<keyword id="KW-0460">Magnesium</keyword>
<keyword id="KW-0479">Metal-binding</keyword>
<keyword id="KW-0547">Nucleotide-binding</keyword>
<keyword id="KW-0658">Purine biosynthesis</keyword>
<name>PURA_BRUAB</name>
<feature type="chain" id="PRO_0000095153" description="Adenylosuccinate synthetase">
    <location>
        <begin position="1"/>
        <end position="429"/>
    </location>
</feature>
<feature type="active site" description="Proton acceptor" evidence="1">
    <location>
        <position position="13"/>
    </location>
</feature>
<feature type="active site" description="Proton donor" evidence="1">
    <location>
        <position position="41"/>
    </location>
</feature>
<feature type="binding site" evidence="1">
    <location>
        <begin position="12"/>
        <end position="18"/>
    </location>
    <ligand>
        <name>GTP</name>
        <dbReference type="ChEBI" id="CHEBI:37565"/>
    </ligand>
</feature>
<feature type="binding site" description="in other chain" evidence="1">
    <location>
        <begin position="13"/>
        <end position="16"/>
    </location>
    <ligand>
        <name>IMP</name>
        <dbReference type="ChEBI" id="CHEBI:58053"/>
        <note>ligand shared between dimeric partners</note>
    </ligand>
</feature>
<feature type="binding site" evidence="1">
    <location>
        <position position="13"/>
    </location>
    <ligand>
        <name>Mg(2+)</name>
        <dbReference type="ChEBI" id="CHEBI:18420"/>
    </ligand>
</feature>
<feature type="binding site" description="in other chain" evidence="1">
    <location>
        <begin position="38"/>
        <end position="41"/>
    </location>
    <ligand>
        <name>IMP</name>
        <dbReference type="ChEBI" id="CHEBI:58053"/>
        <note>ligand shared between dimeric partners</note>
    </ligand>
</feature>
<feature type="binding site" evidence="1">
    <location>
        <begin position="40"/>
        <end position="42"/>
    </location>
    <ligand>
        <name>GTP</name>
        <dbReference type="ChEBI" id="CHEBI:37565"/>
    </ligand>
</feature>
<feature type="binding site" evidence="1">
    <location>
        <position position="40"/>
    </location>
    <ligand>
        <name>Mg(2+)</name>
        <dbReference type="ChEBI" id="CHEBI:18420"/>
    </ligand>
</feature>
<feature type="binding site" description="in other chain" evidence="1">
    <location>
        <position position="129"/>
    </location>
    <ligand>
        <name>IMP</name>
        <dbReference type="ChEBI" id="CHEBI:58053"/>
        <note>ligand shared between dimeric partners</note>
    </ligand>
</feature>
<feature type="binding site" evidence="1">
    <location>
        <position position="143"/>
    </location>
    <ligand>
        <name>IMP</name>
        <dbReference type="ChEBI" id="CHEBI:58053"/>
        <note>ligand shared between dimeric partners</note>
    </ligand>
</feature>
<feature type="binding site" description="in other chain" evidence="1">
    <location>
        <position position="223"/>
    </location>
    <ligand>
        <name>IMP</name>
        <dbReference type="ChEBI" id="CHEBI:58053"/>
        <note>ligand shared between dimeric partners</note>
    </ligand>
</feature>
<feature type="binding site" description="in other chain" evidence="1">
    <location>
        <position position="238"/>
    </location>
    <ligand>
        <name>IMP</name>
        <dbReference type="ChEBI" id="CHEBI:58053"/>
        <note>ligand shared between dimeric partners</note>
    </ligand>
</feature>
<feature type="binding site" evidence="1">
    <location>
        <begin position="298"/>
        <end position="304"/>
    </location>
    <ligand>
        <name>substrate</name>
    </ligand>
</feature>
<feature type="binding site" description="in other chain" evidence="1">
    <location>
        <position position="302"/>
    </location>
    <ligand>
        <name>IMP</name>
        <dbReference type="ChEBI" id="CHEBI:58053"/>
        <note>ligand shared between dimeric partners</note>
    </ligand>
</feature>
<feature type="binding site" evidence="1">
    <location>
        <position position="304"/>
    </location>
    <ligand>
        <name>GTP</name>
        <dbReference type="ChEBI" id="CHEBI:37565"/>
    </ligand>
</feature>
<feature type="binding site" evidence="1">
    <location>
        <begin position="330"/>
        <end position="332"/>
    </location>
    <ligand>
        <name>GTP</name>
        <dbReference type="ChEBI" id="CHEBI:37565"/>
    </ligand>
</feature>
<feature type="binding site" evidence="1">
    <location>
        <begin position="412"/>
        <end position="414"/>
    </location>
    <ligand>
        <name>GTP</name>
        <dbReference type="ChEBI" id="CHEBI:37565"/>
    </ligand>
</feature>
<evidence type="ECO:0000255" key="1">
    <source>
        <dbReference type="HAMAP-Rule" id="MF_00011"/>
    </source>
</evidence>
<organism>
    <name type="scientific">Brucella abortus biovar 1 (strain 9-941)</name>
    <dbReference type="NCBI Taxonomy" id="262698"/>
    <lineage>
        <taxon>Bacteria</taxon>
        <taxon>Pseudomonadati</taxon>
        <taxon>Pseudomonadota</taxon>
        <taxon>Alphaproteobacteria</taxon>
        <taxon>Hyphomicrobiales</taxon>
        <taxon>Brucellaceae</taxon>
        <taxon>Brucella/Ochrobactrum group</taxon>
        <taxon>Brucella</taxon>
    </lineage>
</organism>